<protein>
    <recommendedName>
        <fullName evidence="1">DNA-directed RNA polymerase subunit beta'</fullName>
        <shortName evidence="1">RNAP subunit beta'</shortName>
        <ecNumber evidence="1">2.7.7.6</ecNumber>
    </recommendedName>
    <alternativeName>
        <fullName evidence="1">RNA polymerase subunit beta'</fullName>
    </alternativeName>
    <alternativeName>
        <fullName evidence="1">Transcriptase subunit beta'</fullName>
    </alternativeName>
</protein>
<dbReference type="EC" id="2.7.7.6" evidence="1"/>
<dbReference type="EMBL" id="CP001110">
    <property type="protein sequence ID" value="ACF44837.1"/>
    <property type="molecule type" value="Genomic_DNA"/>
</dbReference>
<dbReference type="RefSeq" id="WP_012509309.1">
    <property type="nucleotide sequence ID" value="NC_011060.1"/>
</dbReference>
<dbReference type="SMR" id="B4SG10"/>
<dbReference type="STRING" id="324925.Ppha_2678"/>
<dbReference type="KEGG" id="pph:Ppha_2678"/>
<dbReference type="eggNOG" id="COG0086">
    <property type="taxonomic scope" value="Bacteria"/>
</dbReference>
<dbReference type="HOGENOM" id="CLU_000524_3_1_10"/>
<dbReference type="OrthoDB" id="9815296at2"/>
<dbReference type="Proteomes" id="UP000002724">
    <property type="component" value="Chromosome"/>
</dbReference>
<dbReference type="GO" id="GO:0000428">
    <property type="term" value="C:DNA-directed RNA polymerase complex"/>
    <property type="evidence" value="ECO:0007669"/>
    <property type="project" value="UniProtKB-KW"/>
</dbReference>
<dbReference type="GO" id="GO:0003677">
    <property type="term" value="F:DNA binding"/>
    <property type="evidence" value="ECO:0007669"/>
    <property type="project" value="UniProtKB-UniRule"/>
</dbReference>
<dbReference type="GO" id="GO:0003899">
    <property type="term" value="F:DNA-directed RNA polymerase activity"/>
    <property type="evidence" value="ECO:0007669"/>
    <property type="project" value="UniProtKB-UniRule"/>
</dbReference>
<dbReference type="GO" id="GO:0000287">
    <property type="term" value="F:magnesium ion binding"/>
    <property type="evidence" value="ECO:0007669"/>
    <property type="project" value="UniProtKB-UniRule"/>
</dbReference>
<dbReference type="GO" id="GO:0008270">
    <property type="term" value="F:zinc ion binding"/>
    <property type="evidence" value="ECO:0007669"/>
    <property type="project" value="UniProtKB-UniRule"/>
</dbReference>
<dbReference type="GO" id="GO:0006351">
    <property type="term" value="P:DNA-templated transcription"/>
    <property type="evidence" value="ECO:0007669"/>
    <property type="project" value="UniProtKB-UniRule"/>
</dbReference>
<dbReference type="CDD" id="cd02655">
    <property type="entry name" value="RNAP_beta'_C"/>
    <property type="match status" value="1"/>
</dbReference>
<dbReference type="CDD" id="cd01609">
    <property type="entry name" value="RNAP_beta'_N"/>
    <property type="match status" value="1"/>
</dbReference>
<dbReference type="FunFam" id="1.10.150.390:FF:000002">
    <property type="entry name" value="DNA-directed RNA polymerase subunit beta"/>
    <property type="match status" value="1"/>
</dbReference>
<dbReference type="Gene3D" id="1.10.132.30">
    <property type="match status" value="1"/>
</dbReference>
<dbReference type="Gene3D" id="1.10.150.390">
    <property type="match status" value="1"/>
</dbReference>
<dbReference type="Gene3D" id="1.10.1790.20">
    <property type="match status" value="1"/>
</dbReference>
<dbReference type="Gene3D" id="1.10.40.90">
    <property type="match status" value="1"/>
</dbReference>
<dbReference type="Gene3D" id="2.40.40.20">
    <property type="match status" value="1"/>
</dbReference>
<dbReference type="Gene3D" id="2.40.50.100">
    <property type="match status" value="3"/>
</dbReference>
<dbReference type="Gene3D" id="4.10.860.120">
    <property type="entry name" value="RNA polymerase II, clamp domain"/>
    <property type="match status" value="1"/>
</dbReference>
<dbReference type="Gene3D" id="1.10.274.100">
    <property type="entry name" value="RNA polymerase Rpb1, domain 3"/>
    <property type="match status" value="1"/>
</dbReference>
<dbReference type="HAMAP" id="MF_01322">
    <property type="entry name" value="RNApol_bact_RpoC"/>
    <property type="match status" value="1"/>
</dbReference>
<dbReference type="InterPro" id="IPR045867">
    <property type="entry name" value="DNA-dir_RpoC_beta_prime"/>
</dbReference>
<dbReference type="InterPro" id="IPR012754">
    <property type="entry name" value="DNA-dir_RpoC_beta_prime_bact"/>
</dbReference>
<dbReference type="InterPro" id="IPR000722">
    <property type="entry name" value="RNA_pol_asu"/>
</dbReference>
<dbReference type="InterPro" id="IPR006592">
    <property type="entry name" value="RNA_pol_N"/>
</dbReference>
<dbReference type="InterPro" id="IPR007080">
    <property type="entry name" value="RNA_pol_Rpb1_1"/>
</dbReference>
<dbReference type="InterPro" id="IPR007066">
    <property type="entry name" value="RNA_pol_Rpb1_3"/>
</dbReference>
<dbReference type="InterPro" id="IPR042102">
    <property type="entry name" value="RNA_pol_Rpb1_3_sf"/>
</dbReference>
<dbReference type="InterPro" id="IPR007083">
    <property type="entry name" value="RNA_pol_Rpb1_4"/>
</dbReference>
<dbReference type="InterPro" id="IPR007081">
    <property type="entry name" value="RNA_pol_Rpb1_5"/>
</dbReference>
<dbReference type="InterPro" id="IPR044893">
    <property type="entry name" value="RNA_pol_Rpb1_clamp_domain"/>
</dbReference>
<dbReference type="InterPro" id="IPR038120">
    <property type="entry name" value="Rpb1_funnel_sf"/>
</dbReference>
<dbReference type="NCBIfam" id="TIGR02386">
    <property type="entry name" value="rpoC_TIGR"/>
    <property type="match status" value="1"/>
</dbReference>
<dbReference type="PANTHER" id="PTHR19376">
    <property type="entry name" value="DNA-DIRECTED RNA POLYMERASE"/>
    <property type="match status" value="1"/>
</dbReference>
<dbReference type="PANTHER" id="PTHR19376:SF54">
    <property type="entry name" value="DNA-DIRECTED RNA POLYMERASE SUBUNIT BETA"/>
    <property type="match status" value="1"/>
</dbReference>
<dbReference type="Pfam" id="PF04997">
    <property type="entry name" value="RNA_pol_Rpb1_1"/>
    <property type="match status" value="1"/>
</dbReference>
<dbReference type="Pfam" id="PF00623">
    <property type="entry name" value="RNA_pol_Rpb1_2"/>
    <property type="match status" value="2"/>
</dbReference>
<dbReference type="Pfam" id="PF04983">
    <property type="entry name" value="RNA_pol_Rpb1_3"/>
    <property type="match status" value="1"/>
</dbReference>
<dbReference type="Pfam" id="PF05000">
    <property type="entry name" value="RNA_pol_Rpb1_4"/>
    <property type="match status" value="1"/>
</dbReference>
<dbReference type="Pfam" id="PF04998">
    <property type="entry name" value="RNA_pol_Rpb1_5"/>
    <property type="match status" value="1"/>
</dbReference>
<dbReference type="SMART" id="SM00663">
    <property type="entry name" value="RPOLA_N"/>
    <property type="match status" value="1"/>
</dbReference>
<dbReference type="SUPFAM" id="SSF64484">
    <property type="entry name" value="beta and beta-prime subunits of DNA dependent RNA-polymerase"/>
    <property type="match status" value="1"/>
</dbReference>
<sequence length="1497" mass="167166">MIFSQGASPLKGEFSRIKFSIASPESILAHSRGEVLKPETINYRTFKPERDGLMCEKIFGPTKDWECYCGKYKRVRYKGIICDRCGVEVTTKSVRRERMGHIALAVPVVHTWFFRSVPSKIGALLDLSTKELERIIYYEVYVVINPGEPGEKQGIKKLDRLTEEQYFQIITEYEDNQDLEDSDPDKFVAKMGGEAIHMLLKNIDLDASAIHLRKVLKESNSEQKRADALKRLKVVEAFRKSYEPHKKTRKKPQGLFPEDELPEPYVYEGNKPEYMVMEVVPVIPPELRPLVPLEGGRFATSDLNDLYRRVIIRNNRLKKLIDIRAPEVILRNEKRMLQEAVDALFDNSRKANAVKTGESNRPLKSLSDALKGKQGRFRQNLLGKRVDYSGRSVIVVGPELKLHECGLPKSMAIELFQPFVIRRLVDRGIAKSVKSAKKLIDKKDPIVWDVLEKVIDGRPVLLNRAPTLHRLGIQAFQPLLIEGKAIQIHPLVCTAFNADFDGDQMAVHIPLSQEAQLEASLLMLSSHNLILPQSGKPVTVPSQDMVLGMYYLTKSRSRDLGEGQIFYSPQDVLIAYNEERVGLHAQIFVQYDGEIDQKFDSLRVLDTMTDLTAEKSAWLKAQIEKKCILLTTVGRVIFNQNVPKEIGFINRVIDKKVAKELIGRLSSEVGNVETAKFLDNIKEVGFHYAMKGGLSVGLSDAIVPETKARHIKSAQRDSTKVVKEYNRGTLTDNERYNQIVDVWQKTSNIVAEESYQKLKKDRDGFNPLYMMLDSGARGSREQVRQLTGMRGLIARPQKSMSGQPGEIIENPIISNLKEGLTVLEYFISTHGARKGLSDTSLKTADAGYLTRRLHDVAQDVIVTIDDCGTTRGLYVHRNIEEETSGQIKFREKIKGRVAARDIIDTLNNNVIVNSGEIITEELAELIQETAGVEEAEIRSVLTCESKIGICSKCYGTNLSVHELVEIGEAVGVIAAQSIGEPGTQLTLRTFHQGGTAQGGISETETKAFYDGQIQFEDIKTVEHTAINEDGVADLRIIVIQKNGKINIADPESGKILKRYLVPHGAHLHCKNGSLVKKDQVMFSSEPNSTQIIAEIPGIIKFADIEKGITYKEEVDPQTGFSQHTIINWRSKLRATETREPRLMIIDASGEVRKTYPVPIKSNLYVEDGQKVEPGDIMAKVPRNLDRVGGDITAGLPKVTELFEARIPTDPAIVTEIDGYVSFGSQRRSSKEIKVKNDFGEEKVYYVQVGKHVLANEGDEVKAGDPLTDGAVSPQDILRIQGPNAVQQYLVNEIQKVYQINAGVEINDKHLEVIVRQMLQKVRVEEPGDTDLLPGDLIDRSAFVESNQSVAEKVRITEKGDAPARIQDSQLHKVRDITKLNRELRKNSKNMIAFEPALQATSHPVLLGITSAALQTESVISAASFQETTKVLTDAAVAGKVDYLAGLKENVIVGKLIPAGTGLKRYKAIKLTGEGQESNATERVVEEPATREGFANER</sequence>
<reference key="1">
    <citation type="submission" date="2008-06" db="EMBL/GenBank/DDBJ databases">
        <title>Complete sequence of Pelodictyon phaeoclathratiforme BU-1.</title>
        <authorList>
            <consortium name="US DOE Joint Genome Institute"/>
            <person name="Lucas S."/>
            <person name="Copeland A."/>
            <person name="Lapidus A."/>
            <person name="Glavina del Rio T."/>
            <person name="Dalin E."/>
            <person name="Tice H."/>
            <person name="Bruce D."/>
            <person name="Goodwin L."/>
            <person name="Pitluck S."/>
            <person name="Schmutz J."/>
            <person name="Larimer F."/>
            <person name="Land M."/>
            <person name="Hauser L."/>
            <person name="Kyrpides N."/>
            <person name="Mikhailova N."/>
            <person name="Liu Z."/>
            <person name="Li T."/>
            <person name="Zhao F."/>
            <person name="Overmann J."/>
            <person name="Bryant D.A."/>
            <person name="Richardson P."/>
        </authorList>
    </citation>
    <scope>NUCLEOTIDE SEQUENCE [LARGE SCALE GENOMIC DNA]</scope>
    <source>
        <strain>DSM 5477 / BU-1</strain>
    </source>
</reference>
<gene>
    <name evidence="1" type="primary">rpoC</name>
    <name type="ordered locus">Ppha_2678</name>
</gene>
<feature type="chain" id="PRO_0000353402" description="DNA-directed RNA polymerase subunit beta'">
    <location>
        <begin position="1"/>
        <end position="1497"/>
    </location>
</feature>
<feature type="region of interest" description="Disordered" evidence="2">
    <location>
        <begin position="1476"/>
        <end position="1497"/>
    </location>
</feature>
<feature type="compositionally biased region" description="Basic and acidic residues" evidence="2">
    <location>
        <begin position="1482"/>
        <end position="1497"/>
    </location>
</feature>
<feature type="binding site" evidence="1">
    <location>
        <position position="67"/>
    </location>
    <ligand>
        <name>Zn(2+)</name>
        <dbReference type="ChEBI" id="CHEBI:29105"/>
        <label>1</label>
    </ligand>
</feature>
<feature type="binding site" evidence="1">
    <location>
        <position position="69"/>
    </location>
    <ligand>
        <name>Zn(2+)</name>
        <dbReference type="ChEBI" id="CHEBI:29105"/>
        <label>1</label>
    </ligand>
</feature>
<feature type="binding site" evidence="1">
    <location>
        <position position="82"/>
    </location>
    <ligand>
        <name>Zn(2+)</name>
        <dbReference type="ChEBI" id="CHEBI:29105"/>
        <label>1</label>
    </ligand>
</feature>
<feature type="binding site" evidence="1">
    <location>
        <position position="85"/>
    </location>
    <ligand>
        <name>Zn(2+)</name>
        <dbReference type="ChEBI" id="CHEBI:29105"/>
        <label>1</label>
    </ligand>
</feature>
<feature type="binding site" evidence="1">
    <location>
        <position position="499"/>
    </location>
    <ligand>
        <name>Mg(2+)</name>
        <dbReference type="ChEBI" id="CHEBI:18420"/>
    </ligand>
</feature>
<feature type="binding site" evidence="1">
    <location>
        <position position="501"/>
    </location>
    <ligand>
        <name>Mg(2+)</name>
        <dbReference type="ChEBI" id="CHEBI:18420"/>
    </ligand>
</feature>
<feature type="binding site" evidence="1">
    <location>
        <position position="503"/>
    </location>
    <ligand>
        <name>Mg(2+)</name>
        <dbReference type="ChEBI" id="CHEBI:18420"/>
    </ligand>
</feature>
<feature type="binding site" evidence="1">
    <location>
        <position position="867"/>
    </location>
    <ligand>
        <name>Zn(2+)</name>
        <dbReference type="ChEBI" id="CHEBI:29105"/>
        <label>2</label>
    </ligand>
</feature>
<feature type="binding site" evidence="1">
    <location>
        <position position="943"/>
    </location>
    <ligand>
        <name>Zn(2+)</name>
        <dbReference type="ChEBI" id="CHEBI:29105"/>
        <label>2</label>
    </ligand>
</feature>
<feature type="binding site" evidence="1">
    <location>
        <position position="950"/>
    </location>
    <ligand>
        <name>Zn(2+)</name>
        <dbReference type="ChEBI" id="CHEBI:29105"/>
        <label>2</label>
    </ligand>
</feature>
<feature type="binding site" evidence="1">
    <location>
        <position position="953"/>
    </location>
    <ligand>
        <name>Zn(2+)</name>
        <dbReference type="ChEBI" id="CHEBI:29105"/>
        <label>2</label>
    </ligand>
</feature>
<comment type="function">
    <text evidence="1">DNA-dependent RNA polymerase catalyzes the transcription of DNA into RNA using the four ribonucleoside triphosphates as substrates.</text>
</comment>
<comment type="catalytic activity">
    <reaction evidence="1">
        <text>RNA(n) + a ribonucleoside 5'-triphosphate = RNA(n+1) + diphosphate</text>
        <dbReference type="Rhea" id="RHEA:21248"/>
        <dbReference type="Rhea" id="RHEA-COMP:14527"/>
        <dbReference type="Rhea" id="RHEA-COMP:17342"/>
        <dbReference type="ChEBI" id="CHEBI:33019"/>
        <dbReference type="ChEBI" id="CHEBI:61557"/>
        <dbReference type="ChEBI" id="CHEBI:140395"/>
        <dbReference type="EC" id="2.7.7.6"/>
    </reaction>
</comment>
<comment type="cofactor">
    <cofactor evidence="1">
        <name>Mg(2+)</name>
        <dbReference type="ChEBI" id="CHEBI:18420"/>
    </cofactor>
    <text evidence="1">Binds 1 Mg(2+) ion per subunit.</text>
</comment>
<comment type="cofactor">
    <cofactor evidence="1">
        <name>Zn(2+)</name>
        <dbReference type="ChEBI" id="CHEBI:29105"/>
    </cofactor>
    <text evidence="1">Binds 2 Zn(2+) ions per subunit.</text>
</comment>
<comment type="subunit">
    <text evidence="1">The RNAP catalytic core consists of 2 alpha, 1 beta, 1 beta' and 1 omega subunit. When a sigma factor is associated with the core the holoenzyme is formed, which can initiate transcription.</text>
</comment>
<comment type="similarity">
    <text evidence="1">Belongs to the RNA polymerase beta' chain family.</text>
</comment>
<keyword id="KW-0240">DNA-directed RNA polymerase</keyword>
<keyword id="KW-0460">Magnesium</keyword>
<keyword id="KW-0479">Metal-binding</keyword>
<keyword id="KW-0548">Nucleotidyltransferase</keyword>
<keyword id="KW-1185">Reference proteome</keyword>
<keyword id="KW-0804">Transcription</keyword>
<keyword id="KW-0808">Transferase</keyword>
<keyword id="KW-0862">Zinc</keyword>
<evidence type="ECO:0000255" key="1">
    <source>
        <dbReference type="HAMAP-Rule" id="MF_01322"/>
    </source>
</evidence>
<evidence type="ECO:0000256" key="2">
    <source>
        <dbReference type="SAM" id="MobiDB-lite"/>
    </source>
</evidence>
<proteinExistence type="inferred from homology"/>
<accession>B4SG10</accession>
<organism>
    <name type="scientific">Pelodictyon phaeoclathratiforme (strain DSM 5477 / BU-1)</name>
    <dbReference type="NCBI Taxonomy" id="324925"/>
    <lineage>
        <taxon>Bacteria</taxon>
        <taxon>Pseudomonadati</taxon>
        <taxon>Chlorobiota</taxon>
        <taxon>Chlorobiia</taxon>
        <taxon>Chlorobiales</taxon>
        <taxon>Chlorobiaceae</taxon>
        <taxon>Chlorobium/Pelodictyon group</taxon>
        <taxon>Pelodictyon</taxon>
    </lineage>
</organism>
<name>RPOC_PELPB</name>